<proteinExistence type="inferred from homology"/>
<keyword id="KW-0067">ATP-binding</keyword>
<keyword id="KW-0143">Chaperone</keyword>
<keyword id="KW-0963">Cytoplasm</keyword>
<keyword id="KW-0547">Nucleotide-binding</keyword>
<keyword id="KW-1185">Reference proteome</keyword>
<keyword id="KW-0346">Stress response</keyword>
<accession>Q5E6Q9</accession>
<name>HTPG_ALIF1</name>
<reference key="1">
    <citation type="journal article" date="2005" name="Proc. Natl. Acad. Sci. U.S.A.">
        <title>Complete genome sequence of Vibrio fischeri: a symbiotic bacterium with pathogenic congeners.</title>
        <authorList>
            <person name="Ruby E.G."/>
            <person name="Urbanowski M."/>
            <person name="Campbell J."/>
            <person name="Dunn A."/>
            <person name="Faini M."/>
            <person name="Gunsalus R."/>
            <person name="Lostroh P."/>
            <person name="Lupp C."/>
            <person name="McCann J."/>
            <person name="Millikan D."/>
            <person name="Schaefer A."/>
            <person name="Stabb E."/>
            <person name="Stevens A."/>
            <person name="Visick K."/>
            <person name="Whistler C."/>
            <person name="Greenberg E.P."/>
        </authorList>
    </citation>
    <scope>NUCLEOTIDE SEQUENCE [LARGE SCALE GENOMIC DNA]</scope>
    <source>
        <strain>ATCC 700601 / ES114</strain>
    </source>
</reference>
<feature type="chain" id="PRO_0000224235" description="Chaperone protein HtpG">
    <location>
        <begin position="1"/>
        <end position="631"/>
    </location>
</feature>
<feature type="region of interest" description="A; substrate-binding" evidence="1">
    <location>
        <begin position="1"/>
        <end position="342"/>
    </location>
</feature>
<feature type="region of interest" description="B" evidence="1">
    <location>
        <begin position="343"/>
        <end position="559"/>
    </location>
</feature>
<feature type="region of interest" description="C" evidence="1">
    <location>
        <begin position="560"/>
        <end position="631"/>
    </location>
</feature>
<comment type="function">
    <text evidence="1">Molecular chaperone. Has ATPase activity.</text>
</comment>
<comment type="subunit">
    <text evidence="1">Homodimer.</text>
</comment>
<comment type="subcellular location">
    <subcellularLocation>
        <location evidence="1">Cytoplasm</location>
    </subcellularLocation>
</comment>
<comment type="similarity">
    <text evidence="1">Belongs to the heat shock protein 90 family.</text>
</comment>
<protein>
    <recommendedName>
        <fullName evidence="1">Chaperone protein HtpG</fullName>
    </recommendedName>
    <alternativeName>
        <fullName evidence="1">Heat shock protein HtpG</fullName>
    </alternativeName>
    <alternativeName>
        <fullName evidence="1">High temperature protein G</fullName>
    </alternativeName>
</protein>
<gene>
    <name evidence="1" type="primary">htpG</name>
    <name type="ordered locus">VF_0792</name>
</gene>
<dbReference type="EMBL" id="CP000020">
    <property type="protein sequence ID" value="AAW85287.1"/>
    <property type="molecule type" value="Genomic_DNA"/>
</dbReference>
<dbReference type="RefSeq" id="WP_011261487.1">
    <property type="nucleotide sequence ID" value="NC_006840.2"/>
</dbReference>
<dbReference type="RefSeq" id="YP_204175.1">
    <property type="nucleotide sequence ID" value="NC_006840.2"/>
</dbReference>
<dbReference type="SMR" id="Q5E6Q9"/>
<dbReference type="STRING" id="312309.VF_0792"/>
<dbReference type="EnsemblBacteria" id="AAW85287">
    <property type="protein sequence ID" value="AAW85287"/>
    <property type="gene ID" value="VF_0792"/>
</dbReference>
<dbReference type="GeneID" id="54163460"/>
<dbReference type="KEGG" id="vfi:VF_0792"/>
<dbReference type="PATRIC" id="fig|312309.11.peg.784"/>
<dbReference type="eggNOG" id="COG0326">
    <property type="taxonomic scope" value="Bacteria"/>
</dbReference>
<dbReference type="HOGENOM" id="CLU_006684_3_0_6"/>
<dbReference type="OrthoDB" id="9802640at2"/>
<dbReference type="Proteomes" id="UP000000537">
    <property type="component" value="Chromosome I"/>
</dbReference>
<dbReference type="GO" id="GO:0005737">
    <property type="term" value="C:cytoplasm"/>
    <property type="evidence" value="ECO:0007669"/>
    <property type="project" value="UniProtKB-SubCell"/>
</dbReference>
<dbReference type="GO" id="GO:0005524">
    <property type="term" value="F:ATP binding"/>
    <property type="evidence" value="ECO:0007669"/>
    <property type="project" value="UniProtKB-UniRule"/>
</dbReference>
<dbReference type="GO" id="GO:0016887">
    <property type="term" value="F:ATP hydrolysis activity"/>
    <property type="evidence" value="ECO:0007669"/>
    <property type="project" value="InterPro"/>
</dbReference>
<dbReference type="GO" id="GO:0140662">
    <property type="term" value="F:ATP-dependent protein folding chaperone"/>
    <property type="evidence" value="ECO:0007669"/>
    <property type="project" value="InterPro"/>
</dbReference>
<dbReference type="GO" id="GO:0051082">
    <property type="term" value="F:unfolded protein binding"/>
    <property type="evidence" value="ECO:0007669"/>
    <property type="project" value="UniProtKB-UniRule"/>
</dbReference>
<dbReference type="CDD" id="cd16927">
    <property type="entry name" value="HATPase_Hsp90-like"/>
    <property type="match status" value="1"/>
</dbReference>
<dbReference type="FunFam" id="1.20.120.790:FF:000002">
    <property type="entry name" value="Molecular chaperone HtpG"/>
    <property type="match status" value="1"/>
</dbReference>
<dbReference type="FunFam" id="3.30.230.80:FF:000002">
    <property type="entry name" value="Molecular chaperone HtpG"/>
    <property type="match status" value="1"/>
</dbReference>
<dbReference type="FunFam" id="3.30.565.10:FF:000009">
    <property type="entry name" value="Molecular chaperone HtpG"/>
    <property type="match status" value="1"/>
</dbReference>
<dbReference type="Gene3D" id="3.30.230.80">
    <property type="match status" value="1"/>
</dbReference>
<dbReference type="Gene3D" id="3.40.50.11260">
    <property type="match status" value="1"/>
</dbReference>
<dbReference type="Gene3D" id="1.20.120.790">
    <property type="entry name" value="Heat shock protein 90, C-terminal domain"/>
    <property type="match status" value="1"/>
</dbReference>
<dbReference type="Gene3D" id="3.30.565.10">
    <property type="entry name" value="Histidine kinase-like ATPase, C-terminal domain"/>
    <property type="match status" value="1"/>
</dbReference>
<dbReference type="HAMAP" id="MF_00505">
    <property type="entry name" value="HSP90"/>
    <property type="match status" value="1"/>
</dbReference>
<dbReference type="InterPro" id="IPR036890">
    <property type="entry name" value="HATPase_C_sf"/>
</dbReference>
<dbReference type="InterPro" id="IPR019805">
    <property type="entry name" value="Heat_shock_protein_90_CS"/>
</dbReference>
<dbReference type="InterPro" id="IPR037196">
    <property type="entry name" value="HSP90_C"/>
</dbReference>
<dbReference type="InterPro" id="IPR001404">
    <property type="entry name" value="Hsp90_fam"/>
</dbReference>
<dbReference type="InterPro" id="IPR020575">
    <property type="entry name" value="Hsp90_N"/>
</dbReference>
<dbReference type="InterPro" id="IPR020568">
    <property type="entry name" value="Ribosomal_Su5_D2-typ_SF"/>
</dbReference>
<dbReference type="NCBIfam" id="NF003555">
    <property type="entry name" value="PRK05218.1"/>
    <property type="match status" value="1"/>
</dbReference>
<dbReference type="PANTHER" id="PTHR11528">
    <property type="entry name" value="HEAT SHOCK PROTEIN 90 FAMILY MEMBER"/>
    <property type="match status" value="1"/>
</dbReference>
<dbReference type="Pfam" id="PF13589">
    <property type="entry name" value="HATPase_c_3"/>
    <property type="match status" value="1"/>
</dbReference>
<dbReference type="Pfam" id="PF00183">
    <property type="entry name" value="HSP90"/>
    <property type="match status" value="1"/>
</dbReference>
<dbReference type="PIRSF" id="PIRSF002583">
    <property type="entry name" value="Hsp90"/>
    <property type="match status" value="1"/>
</dbReference>
<dbReference type="PRINTS" id="PR00775">
    <property type="entry name" value="HEATSHOCK90"/>
</dbReference>
<dbReference type="SMART" id="SM00387">
    <property type="entry name" value="HATPase_c"/>
    <property type="match status" value="1"/>
</dbReference>
<dbReference type="SUPFAM" id="SSF55874">
    <property type="entry name" value="ATPase domain of HSP90 chaperone/DNA topoisomerase II/histidine kinase"/>
    <property type="match status" value="1"/>
</dbReference>
<dbReference type="SUPFAM" id="SSF110942">
    <property type="entry name" value="HSP90 C-terminal domain"/>
    <property type="match status" value="1"/>
</dbReference>
<dbReference type="SUPFAM" id="SSF54211">
    <property type="entry name" value="Ribosomal protein S5 domain 2-like"/>
    <property type="match status" value="1"/>
</dbReference>
<dbReference type="PROSITE" id="PS00298">
    <property type="entry name" value="HSP90"/>
    <property type="match status" value="1"/>
</dbReference>
<evidence type="ECO:0000255" key="1">
    <source>
        <dbReference type="HAMAP-Rule" id="MF_00505"/>
    </source>
</evidence>
<organism>
    <name type="scientific">Aliivibrio fischeri (strain ATCC 700601 / ES114)</name>
    <name type="common">Vibrio fischeri</name>
    <dbReference type="NCBI Taxonomy" id="312309"/>
    <lineage>
        <taxon>Bacteria</taxon>
        <taxon>Pseudomonadati</taxon>
        <taxon>Pseudomonadota</taxon>
        <taxon>Gammaproteobacteria</taxon>
        <taxon>Vibrionales</taxon>
        <taxon>Vibrionaceae</taxon>
        <taxon>Aliivibrio</taxon>
    </lineage>
</organism>
<sequence length="631" mass="71628">MSEQTANKETRGFQSEVKQLLHLMIHSLYSNKEIFLRELISNASDASDKLRFKALSNGDLYEGNADLGVKLSFNEAANTLTISDNGIGMSREDVIEHLGTIAKSGTADFFSKLSEDQSKDSQLIGQFGVGFYSAFIVADAVTVRTRAAGSEKDQGVQWHSEGEGDYTIEDITKESRGTDIILHMREEGKEFLNEWRLKEVIGKYSDHIGIPVSIWTVEKDEEGKDKEGKWEQVNKAQALWTRSKSDIEDAEYQEFYKHVSHDFADPLTWSHNKVEGKNDYTSLLYIPAKAPFDMMNRDHKSGLKLYVQRVFIMDDAEQFMPTYLRFVKGLIDSNDLPLNVSREILQDNKVTQSLRSACTKRVLGMLEKMAKKDDEKYLTFWKQFGQVLKEGLAEDLANKEKIAGLLRFATTEKDSSEQALGLAGYVERMKEEQDKIFYLTADSYAAAKNSPHLEQFKAKGIEVVLMYDRIDEWLMSYLTEFDGKQFQSITKAGLDLSKFEDEAEKEKHKETEEEFKSVVERTKSYLGDRVKEVRTTFKLATTPAVVVTDDFEMGTQMAKLLEAAGQAAPEVKYIFEINPDHALVKQMADEADEEAFGRWVEMLLGQAMLAERGSLEDPSQFLSAMNQLLAK</sequence>